<comment type="function">
    <text evidence="1">Is required not only for elongation of protein synthesis but also for the initiation of all mRNA translation through initiator tRNA(fMet) aminoacylation.</text>
</comment>
<comment type="catalytic activity">
    <reaction evidence="1">
        <text>tRNA(Met) + L-methionine + ATP = L-methionyl-tRNA(Met) + AMP + diphosphate</text>
        <dbReference type="Rhea" id="RHEA:13481"/>
        <dbReference type="Rhea" id="RHEA-COMP:9667"/>
        <dbReference type="Rhea" id="RHEA-COMP:9698"/>
        <dbReference type="ChEBI" id="CHEBI:30616"/>
        <dbReference type="ChEBI" id="CHEBI:33019"/>
        <dbReference type="ChEBI" id="CHEBI:57844"/>
        <dbReference type="ChEBI" id="CHEBI:78442"/>
        <dbReference type="ChEBI" id="CHEBI:78530"/>
        <dbReference type="ChEBI" id="CHEBI:456215"/>
        <dbReference type="EC" id="6.1.1.10"/>
    </reaction>
</comment>
<comment type="cofactor">
    <cofactor evidence="1">
        <name>Zn(2+)</name>
        <dbReference type="ChEBI" id="CHEBI:29105"/>
    </cofactor>
    <text evidence="1">Binds 1 zinc ion per subunit.</text>
</comment>
<comment type="subunit">
    <text evidence="1">Homodimer.</text>
</comment>
<comment type="subcellular location">
    <subcellularLocation>
        <location evidence="1">Cytoplasm</location>
    </subcellularLocation>
</comment>
<comment type="similarity">
    <text evidence="1">Belongs to the class-I aminoacyl-tRNA synthetase family. MetG type 1 subfamily.</text>
</comment>
<feature type="chain" id="PRO_1000093733" description="Methionine--tRNA ligase">
    <location>
        <begin position="1"/>
        <end position="688"/>
    </location>
</feature>
<feature type="domain" description="tRNA-binding" evidence="1">
    <location>
        <begin position="587"/>
        <end position="688"/>
    </location>
</feature>
<feature type="region of interest" description="Disordered" evidence="2">
    <location>
        <begin position="552"/>
        <end position="576"/>
    </location>
</feature>
<feature type="short sequence motif" description="'HIGH' region">
    <location>
        <begin position="15"/>
        <end position="25"/>
    </location>
</feature>
<feature type="short sequence motif" description="'KMSKS' region">
    <location>
        <begin position="332"/>
        <end position="336"/>
    </location>
</feature>
<feature type="compositionally biased region" description="Basic and acidic residues" evidence="2">
    <location>
        <begin position="554"/>
        <end position="564"/>
    </location>
</feature>
<feature type="binding site" evidence="1">
    <location>
        <position position="146"/>
    </location>
    <ligand>
        <name>Zn(2+)</name>
        <dbReference type="ChEBI" id="CHEBI:29105"/>
    </ligand>
</feature>
<feature type="binding site" evidence="1">
    <location>
        <position position="149"/>
    </location>
    <ligand>
        <name>Zn(2+)</name>
        <dbReference type="ChEBI" id="CHEBI:29105"/>
    </ligand>
</feature>
<feature type="binding site" evidence="1">
    <location>
        <position position="159"/>
    </location>
    <ligand>
        <name>Zn(2+)</name>
        <dbReference type="ChEBI" id="CHEBI:29105"/>
    </ligand>
</feature>
<feature type="binding site" evidence="1">
    <location>
        <position position="162"/>
    </location>
    <ligand>
        <name>Zn(2+)</name>
        <dbReference type="ChEBI" id="CHEBI:29105"/>
    </ligand>
</feature>
<feature type="binding site" evidence="1">
    <location>
        <position position="335"/>
    </location>
    <ligand>
        <name>ATP</name>
        <dbReference type="ChEBI" id="CHEBI:30616"/>
    </ligand>
</feature>
<accession>B1KQM2</accession>
<protein>
    <recommendedName>
        <fullName evidence="1">Methionine--tRNA ligase</fullName>
        <ecNumber evidence="1">6.1.1.10</ecNumber>
    </recommendedName>
    <alternativeName>
        <fullName evidence="1">Methionyl-tRNA synthetase</fullName>
        <shortName evidence="1">MetRS</shortName>
    </alternativeName>
</protein>
<proteinExistence type="inferred from homology"/>
<reference key="1">
    <citation type="submission" date="2008-02" db="EMBL/GenBank/DDBJ databases">
        <title>Complete sequence of Shewanella woodyi ATCC 51908.</title>
        <authorList>
            <consortium name="US DOE Joint Genome Institute"/>
            <person name="Copeland A."/>
            <person name="Lucas S."/>
            <person name="Lapidus A."/>
            <person name="Glavina del Rio T."/>
            <person name="Dalin E."/>
            <person name="Tice H."/>
            <person name="Bruce D."/>
            <person name="Goodwin L."/>
            <person name="Pitluck S."/>
            <person name="Sims D."/>
            <person name="Brettin T."/>
            <person name="Detter J.C."/>
            <person name="Han C."/>
            <person name="Kuske C.R."/>
            <person name="Schmutz J."/>
            <person name="Larimer F."/>
            <person name="Land M."/>
            <person name="Hauser L."/>
            <person name="Kyrpides N."/>
            <person name="Lykidis A."/>
            <person name="Zhao J.-S."/>
            <person name="Richardson P."/>
        </authorList>
    </citation>
    <scope>NUCLEOTIDE SEQUENCE [LARGE SCALE GENOMIC DNA]</scope>
    <source>
        <strain>ATCC 51908 / MS32</strain>
    </source>
</reference>
<organism>
    <name type="scientific">Shewanella woodyi (strain ATCC 51908 / MS32)</name>
    <dbReference type="NCBI Taxonomy" id="392500"/>
    <lineage>
        <taxon>Bacteria</taxon>
        <taxon>Pseudomonadati</taxon>
        <taxon>Pseudomonadota</taxon>
        <taxon>Gammaproteobacteria</taxon>
        <taxon>Alteromonadales</taxon>
        <taxon>Shewanellaceae</taxon>
        <taxon>Shewanella</taxon>
    </lineage>
</organism>
<dbReference type="EC" id="6.1.1.10" evidence="1"/>
<dbReference type="EMBL" id="CP000961">
    <property type="protein sequence ID" value="ACA86261.1"/>
    <property type="molecule type" value="Genomic_DNA"/>
</dbReference>
<dbReference type="RefSeq" id="WP_012324607.1">
    <property type="nucleotide sequence ID" value="NC_010506.1"/>
</dbReference>
<dbReference type="SMR" id="B1KQM2"/>
<dbReference type="STRING" id="392500.Swoo_1977"/>
<dbReference type="KEGG" id="swd:Swoo_1977"/>
<dbReference type="eggNOG" id="COG0073">
    <property type="taxonomic scope" value="Bacteria"/>
</dbReference>
<dbReference type="eggNOG" id="COG0143">
    <property type="taxonomic scope" value="Bacteria"/>
</dbReference>
<dbReference type="HOGENOM" id="CLU_009710_7_0_6"/>
<dbReference type="Proteomes" id="UP000002168">
    <property type="component" value="Chromosome"/>
</dbReference>
<dbReference type="GO" id="GO:0005829">
    <property type="term" value="C:cytosol"/>
    <property type="evidence" value="ECO:0007669"/>
    <property type="project" value="TreeGrafter"/>
</dbReference>
<dbReference type="GO" id="GO:0005524">
    <property type="term" value="F:ATP binding"/>
    <property type="evidence" value="ECO:0007669"/>
    <property type="project" value="UniProtKB-UniRule"/>
</dbReference>
<dbReference type="GO" id="GO:0046872">
    <property type="term" value="F:metal ion binding"/>
    <property type="evidence" value="ECO:0007669"/>
    <property type="project" value="UniProtKB-KW"/>
</dbReference>
<dbReference type="GO" id="GO:0004825">
    <property type="term" value="F:methionine-tRNA ligase activity"/>
    <property type="evidence" value="ECO:0007669"/>
    <property type="project" value="UniProtKB-UniRule"/>
</dbReference>
<dbReference type="GO" id="GO:0000049">
    <property type="term" value="F:tRNA binding"/>
    <property type="evidence" value="ECO:0007669"/>
    <property type="project" value="UniProtKB-KW"/>
</dbReference>
<dbReference type="GO" id="GO:0006431">
    <property type="term" value="P:methionyl-tRNA aminoacylation"/>
    <property type="evidence" value="ECO:0007669"/>
    <property type="project" value="UniProtKB-UniRule"/>
</dbReference>
<dbReference type="CDD" id="cd07957">
    <property type="entry name" value="Anticodon_Ia_Met"/>
    <property type="match status" value="1"/>
</dbReference>
<dbReference type="CDD" id="cd00814">
    <property type="entry name" value="MetRS_core"/>
    <property type="match status" value="1"/>
</dbReference>
<dbReference type="CDD" id="cd02800">
    <property type="entry name" value="tRNA_bind_EcMetRS_like"/>
    <property type="match status" value="1"/>
</dbReference>
<dbReference type="FunFam" id="1.10.730.10:FF:000005">
    <property type="entry name" value="Methionine--tRNA ligase"/>
    <property type="match status" value="1"/>
</dbReference>
<dbReference type="FunFam" id="2.20.28.20:FF:000001">
    <property type="entry name" value="Methionine--tRNA ligase"/>
    <property type="match status" value="1"/>
</dbReference>
<dbReference type="FunFam" id="2.40.50.140:FF:000042">
    <property type="entry name" value="Methionine--tRNA ligase"/>
    <property type="match status" value="1"/>
</dbReference>
<dbReference type="Gene3D" id="3.40.50.620">
    <property type="entry name" value="HUPs"/>
    <property type="match status" value="1"/>
</dbReference>
<dbReference type="Gene3D" id="1.10.730.10">
    <property type="entry name" value="Isoleucyl-tRNA Synthetase, Domain 1"/>
    <property type="match status" value="1"/>
</dbReference>
<dbReference type="Gene3D" id="2.20.28.20">
    <property type="entry name" value="Methionyl-tRNA synthetase, Zn-domain"/>
    <property type="match status" value="1"/>
</dbReference>
<dbReference type="Gene3D" id="2.40.50.140">
    <property type="entry name" value="Nucleic acid-binding proteins"/>
    <property type="match status" value="1"/>
</dbReference>
<dbReference type="HAMAP" id="MF_00098">
    <property type="entry name" value="Met_tRNA_synth_type1"/>
    <property type="match status" value="1"/>
</dbReference>
<dbReference type="InterPro" id="IPR001412">
    <property type="entry name" value="aa-tRNA-synth_I_CS"/>
</dbReference>
<dbReference type="InterPro" id="IPR041872">
    <property type="entry name" value="Anticodon_Met"/>
</dbReference>
<dbReference type="InterPro" id="IPR004495">
    <property type="entry name" value="Met-tRNA-synth_bsu_C"/>
</dbReference>
<dbReference type="InterPro" id="IPR023458">
    <property type="entry name" value="Met-tRNA_ligase_1"/>
</dbReference>
<dbReference type="InterPro" id="IPR014758">
    <property type="entry name" value="Met-tRNA_synth"/>
</dbReference>
<dbReference type="InterPro" id="IPR015413">
    <property type="entry name" value="Methionyl/Leucyl_tRNA_Synth"/>
</dbReference>
<dbReference type="InterPro" id="IPR033911">
    <property type="entry name" value="MetRS_core"/>
</dbReference>
<dbReference type="InterPro" id="IPR029038">
    <property type="entry name" value="MetRS_Zn"/>
</dbReference>
<dbReference type="InterPro" id="IPR012340">
    <property type="entry name" value="NA-bd_OB-fold"/>
</dbReference>
<dbReference type="InterPro" id="IPR014729">
    <property type="entry name" value="Rossmann-like_a/b/a_fold"/>
</dbReference>
<dbReference type="InterPro" id="IPR002547">
    <property type="entry name" value="tRNA-bd_dom"/>
</dbReference>
<dbReference type="InterPro" id="IPR009080">
    <property type="entry name" value="tRNAsynth_Ia_anticodon-bd"/>
</dbReference>
<dbReference type="NCBIfam" id="TIGR00398">
    <property type="entry name" value="metG"/>
    <property type="match status" value="1"/>
</dbReference>
<dbReference type="NCBIfam" id="TIGR00399">
    <property type="entry name" value="metG_C_term"/>
    <property type="match status" value="1"/>
</dbReference>
<dbReference type="NCBIfam" id="NF001100">
    <property type="entry name" value="PRK00133.1"/>
    <property type="match status" value="1"/>
</dbReference>
<dbReference type="PANTHER" id="PTHR45765">
    <property type="entry name" value="METHIONINE--TRNA LIGASE"/>
    <property type="match status" value="1"/>
</dbReference>
<dbReference type="PANTHER" id="PTHR45765:SF1">
    <property type="entry name" value="METHIONINE--TRNA LIGASE, CYTOPLASMIC"/>
    <property type="match status" value="1"/>
</dbReference>
<dbReference type="Pfam" id="PF19303">
    <property type="entry name" value="Anticodon_3"/>
    <property type="match status" value="1"/>
</dbReference>
<dbReference type="Pfam" id="PF09334">
    <property type="entry name" value="tRNA-synt_1g"/>
    <property type="match status" value="1"/>
</dbReference>
<dbReference type="Pfam" id="PF01588">
    <property type="entry name" value="tRNA_bind"/>
    <property type="match status" value="1"/>
</dbReference>
<dbReference type="PRINTS" id="PR01041">
    <property type="entry name" value="TRNASYNTHMET"/>
</dbReference>
<dbReference type="SUPFAM" id="SSF47323">
    <property type="entry name" value="Anticodon-binding domain of a subclass of class I aminoacyl-tRNA synthetases"/>
    <property type="match status" value="1"/>
</dbReference>
<dbReference type="SUPFAM" id="SSF57770">
    <property type="entry name" value="Methionyl-tRNA synthetase (MetRS), Zn-domain"/>
    <property type="match status" value="1"/>
</dbReference>
<dbReference type="SUPFAM" id="SSF50249">
    <property type="entry name" value="Nucleic acid-binding proteins"/>
    <property type="match status" value="1"/>
</dbReference>
<dbReference type="SUPFAM" id="SSF52374">
    <property type="entry name" value="Nucleotidylyl transferase"/>
    <property type="match status" value="1"/>
</dbReference>
<dbReference type="PROSITE" id="PS00178">
    <property type="entry name" value="AA_TRNA_LIGASE_I"/>
    <property type="match status" value="1"/>
</dbReference>
<dbReference type="PROSITE" id="PS50886">
    <property type="entry name" value="TRBD"/>
    <property type="match status" value="1"/>
</dbReference>
<sequence length="688" mass="77508">MANSQRKILVTSALPYANGPIHLGHMLEYIQTDIWSRFQKLRGHECHYICADDAHGTPIMLKAQQMGIEPEEMIAQVNREHQQDFADFNIQFDNFHSTHSVENRELSSDIYLKLRDAGFIKTRTISQLFDPEKSMFLPDRFVKGTCPKCKSEDQYGDNCDNCGATYNPTDLINPKSAVSGATPVMKDSEHFFFDLPAFETMLSEWTRSGAIQDEIANKLGEWFEQGLQQWDISRDAPYFGFEIPDAPGKYFYVWLDAPIGYMGSFKNLCDRREDLNFDDFWAKDSSAEVYHFIGKDIVNFHSLFWPAMLEGAGFRKPTSVFAHGYVTVNGAKMSKSKGTFIKARTYLDNLDPEYLRYYYAAKLSGRIDDLDLNLEDFAQRVNSDLVGKLVNLASRTAGFISKRFDGKLAKVADTSLEQTFLGKQTLIAELYESREFGKAMREIMALADLANAYVADAAPWQLIKDEAKQEEAHQVCSNALNLFRILVTYLKPVLPKLADDVEAFLQFPLTWDNLNADLAGHEIAKFKALMQRVDMKNIEAIIEASKDNLVPAEAPKKADSKKATDTPVDTRPPLESDPISEEISFEDFAKIDLRIARIAKAEHVPEANKLLKLQLDLGGETKQVFAGIKSAYAPEDLEGKLTVMVANLAPRKMRFGMSEGMVLAAGPGNKDLWILEPHEGAQPGMRVK</sequence>
<evidence type="ECO:0000255" key="1">
    <source>
        <dbReference type="HAMAP-Rule" id="MF_00098"/>
    </source>
</evidence>
<evidence type="ECO:0000256" key="2">
    <source>
        <dbReference type="SAM" id="MobiDB-lite"/>
    </source>
</evidence>
<keyword id="KW-0030">Aminoacyl-tRNA synthetase</keyword>
<keyword id="KW-0067">ATP-binding</keyword>
<keyword id="KW-0963">Cytoplasm</keyword>
<keyword id="KW-0436">Ligase</keyword>
<keyword id="KW-0479">Metal-binding</keyword>
<keyword id="KW-0547">Nucleotide-binding</keyword>
<keyword id="KW-0648">Protein biosynthesis</keyword>
<keyword id="KW-1185">Reference proteome</keyword>
<keyword id="KW-0694">RNA-binding</keyword>
<keyword id="KW-0820">tRNA-binding</keyword>
<keyword id="KW-0862">Zinc</keyword>
<name>SYM_SHEWM</name>
<gene>
    <name evidence="1" type="primary">metG</name>
    <name type="ordered locus">Swoo_1977</name>
</gene>